<feature type="chain" id="PRO_1000057642" description="Thiamine-phosphate synthase">
    <location>
        <begin position="1"/>
        <end position="211"/>
    </location>
</feature>
<feature type="binding site" evidence="1">
    <location>
        <begin position="37"/>
        <end position="41"/>
    </location>
    <ligand>
        <name>4-amino-2-methyl-5-(diphosphooxymethyl)pyrimidine</name>
        <dbReference type="ChEBI" id="CHEBI:57841"/>
    </ligand>
</feature>
<feature type="binding site" evidence="1">
    <location>
        <position position="69"/>
    </location>
    <ligand>
        <name>4-amino-2-methyl-5-(diphosphooxymethyl)pyrimidine</name>
        <dbReference type="ChEBI" id="CHEBI:57841"/>
    </ligand>
</feature>
<feature type="binding site" evidence="1">
    <location>
        <position position="70"/>
    </location>
    <ligand>
        <name>Mg(2+)</name>
        <dbReference type="ChEBI" id="CHEBI:18420"/>
    </ligand>
</feature>
<feature type="binding site" evidence="1">
    <location>
        <position position="89"/>
    </location>
    <ligand>
        <name>Mg(2+)</name>
        <dbReference type="ChEBI" id="CHEBI:18420"/>
    </ligand>
</feature>
<feature type="binding site" evidence="1">
    <location>
        <position position="108"/>
    </location>
    <ligand>
        <name>4-amino-2-methyl-5-(diphosphooxymethyl)pyrimidine</name>
        <dbReference type="ChEBI" id="CHEBI:57841"/>
    </ligand>
</feature>
<feature type="binding site" evidence="1">
    <location>
        <begin position="134"/>
        <end position="136"/>
    </location>
    <ligand>
        <name>2-[(2R,5Z)-2-carboxy-4-methylthiazol-5(2H)-ylidene]ethyl phosphate</name>
        <dbReference type="ChEBI" id="CHEBI:62899"/>
    </ligand>
</feature>
<feature type="binding site" evidence="1">
    <location>
        <position position="137"/>
    </location>
    <ligand>
        <name>4-amino-2-methyl-5-(diphosphooxymethyl)pyrimidine</name>
        <dbReference type="ChEBI" id="CHEBI:57841"/>
    </ligand>
</feature>
<feature type="binding site" evidence="1">
    <location>
        <position position="166"/>
    </location>
    <ligand>
        <name>2-[(2R,5Z)-2-carboxy-4-methylthiazol-5(2H)-ylidene]ethyl phosphate</name>
        <dbReference type="ChEBI" id="CHEBI:62899"/>
    </ligand>
</feature>
<feature type="binding site" evidence="1">
    <location>
        <begin position="186"/>
        <end position="187"/>
    </location>
    <ligand>
        <name>2-[(2R,5Z)-2-carboxy-4-methylthiazol-5(2H)-ylidene]ethyl phosphate</name>
        <dbReference type="ChEBI" id="CHEBI:62899"/>
    </ligand>
</feature>
<dbReference type="EC" id="2.5.1.3" evidence="1"/>
<dbReference type="EMBL" id="CP000802">
    <property type="protein sequence ID" value="ABV08397.1"/>
    <property type="molecule type" value="Genomic_DNA"/>
</dbReference>
<dbReference type="RefSeq" id="WP_000284601.1">
    <property type="nucleotide sequence ID" value="NC_009800.1"/>
</dbReference>
<dbReference type="SMR" id="A8A793"/>
<dbReference type="KEGG" id="ecx:EcHS_A4227"/>
<dbReference type="HOGENOM" id="CLU_018272_3_3_6"/>
<dbReference type="UniPathway" id="UPA00060">
    <property type="reaction ID" value="UER00141"/>
</dbReference>
<dbReference type="GO" id="GO:0005737">
    <property type="term" value="C:cytoplasm"/>
    <property type="evidence" value="ECO:0007669"/>
    <property type="project" value="TreeGrafter"/>
</dbReference>
<dbReference type="GO" id="GO:0000287">
    <property type="term" value="F:magnesium ion binding"/>
    <property type="evidence" value="ECO:0007669"/>
    <property type="project" value="UniProtKB-UniRule"/>
</dbReference>
<dbReference type="GO" id="GO:0004789">
    <property type="term" value="F:thiamine-phosphate diphosphorylase activity"/>
    <property type="evidence" value="ECO:0007669"/>
    <property type="project" value="UniProtKB-UniRule"/>
</dbReference>
<dbReference type="GO" id="GO:0009228">
    <property type="term" value="P:thiamine biosynthetic process"/>
    <property type="evidence" value="ECO:0007669"/>
    <property type="project" value="UniProtKB-KW"/>
</dbReference>
<dbReference type="GO" id="GO:0009229">
    <property type="term" value="P:thiamine diphosphate biosynthetic process"/>
    <property type="evidence" value="ECO:0007669"/>
    <property type="project" value="UniProtKB-UniRule"/>
</dbReference>
<dbReference type="CDD" id="cd00564">
    <property type="entry name" value="TMP_TenI"/>
    <property type="match status" value="1"/>
</dbReference>
<dbReference type="FunFam" id="3.20.20.70:FF:000064">
    <property type="entry name" value="Thiamine-phosphate synthase"/>
    <property type="match status" value="1"/>
</dbReference>
<dbReference type="Gene3D" id="3.20.20.70">
    <property type="entry name" value="Aldolase class I"/>
    <property type="match status" value="1"/>
</dbReference>
<dbReference type="HAMAP" id="MF_00097">
    <property type="entry name" value="TMP_synthase"/>
    <property type="match status" value="1"/>
</dbReference>
<dbReference type="InterPro" id="IPR013785">
    <property type="entry name" value="Aldolase_TIM"/>
</dbReference>
<dbReference type="InterPro" id="IPR036206">
    <property type="entry name" value="ThiamineP_synth_sf"/>
</dbReference>
<dbReference type="InterPro" id="IPR022998">
    <property type="entry name" value="ThiamineP_synth_TenI"/>
</dbReference>
<dbReference type="InterPro" id="IPR034291">
    <property type="entry name" value="TMP_synthase"/>
</dbReference>
<dbReference type="NCBIfam" id="NF002904">
    <property type="entry name" value="PRK03512.1"/>
    <property type="match status" value="1"/>
</dbReference>
<dbReference type="NCBIfam" id="TIGR00693">
    <property type="entry name" value="thiE"/>
    <property type="match status" value="1"/>
</dbReference>
<dbReference type="PANTHER" id="PTHR20857">
    <property type="entry name" value="THIAMINE-PHOSPHATE PYROPHOSPHORYLASE"/>
    <property type="match status" value="1"/>
</dbReference>
<dbReference type="PANTHER" id="PTHR20857:SF15">
    <property type="entry name" value="THIAMINE-PHOSPHATE SYNTHASE"/>
    <property type="match status" value="1"/>
</dbReference>
<dbReference type="Pfam" id="PF02581">
    <property type="entry name" value="TMP-TENI"/>
    <property type="match status" value="1"/>
</dbReference>
<dbReference type="SUPFAM" id="SSF51391">
    <property type="entry name" value="Thiamin phosphate synthase"/>
    <property type="match status" value="1"/>
</dbReference>
<evidence type="ECO:0000255" key="1">
    <source>
        <dbReference type="HAMAP-Rule" id="MF_00097"/>
    </source>
</evidence>
<comment type="function">
    <text evidence="1">Condenses 4-methyl-5-(beta-hydroxyethyl)thiazole monophosphate (THZ-P) and 2-methyl-4-amino-5-hydroxymethyl pyrimidine pyrophosphate (HMP-PP) to form thiamine monophosphate (TMP).</text>
</comment>
<comment type="catalytic activity">
    <reaction evidence="1">
        <text>2-[(2R,5Z)-2-carboxy-4-methylthiazol-5(2H)-ylidene]ethyl phosphate + 4-amino-2-methyl-5-(diphosphooxymethyl)pyrimidine + 2 H(+) = thiamine phosphate + CO2 + diphosphate</text>
        <dbReference type="Rhea" id="RHEA:47844"/>
        <dbReference type="ChEBI" id="CHEBI:15378"/>
        <dbReference type="ChEBI" id="CHEBI:16526"/>
        <dbReference type="ChEBI" id="CHEBI:33019"/>
        <dbReference type="ChEBI" id="CHEBI:37575"/>
        <dbReference type="ChEBI" id="CHEBI:57841"/>
        <dbReference type="ChEBI" id="CHEBI:62899"/>
        <dbReference type="EC" id="2.5.1.3"/>
    </reaction>
</comment>
<comment type="catalytic activity">
    <reaction evidence="1">
        <text>2-(2-carboxy-4-methylthiazol-5-yl)ethyl phosphate + 4-amino-2-methyl-5-(diphosphooxymethyl)pyrimidine + 2 H(+) = thiamine phosphate + CO2 + diphosphate</text>
        <dbReference type="Rhea" id="RHEA:47848"/>
        <dbReference type="ChEBI" id="CHEBI:15378"/>
        <dbReference type="ChEBI" id="CHEBI:16526"/>
        <dbReference type="ChEBI" id="CHEBI:33019"/>
        <dbReference type="ChEBI" id="CHEBI:37575"/>
        <dbReference type="ChEBI" id="CHEBI:57841"/>
        <dbReference type="ChEBI" id="CHEBI:62890"/>
        <dbReference type="EC" id="2.5.1.3"/>
    </reaction>
</comment>
<comment type="catalytic activity">
    <reaction evidence="1">
        <text>4-methyl-5-(2-phosphooxyethyl)-thiazole + 4-amino-2-methyl-5-(diphosphooxymethyl)pyrimidine + H(+) = thiamine phosphate + diphosphate</text>
        <dbReference type="Rhea" id="RHEA:22328"/>
        <dbReference type="ChEBI" id="CHEBI:15378"/>
        <dbReference type="ChEBI" id="CHEBI:33019"/>
        <dbReference type="ChEBI" id="CHEBI:37575"/>
        <dbReference type="ChEBI" id="CHEBI:57841"/>
        <dbReference type="ChEBI" id="CHEBI:58296"/>
        <dbReference type="EC" id="2.5.1.3"/>
    </reaction>
</comment>
<comment type="cofactor">
    <cofactor evidence="1">
        <name>Mg(2+)</name>
        <dbReference type="ChEBI" id="CHEBI:18420"/>
    </cofactor>
    <text evidence="1">Binds 1 Mg(2+) ion per subunit.</text>
</comment>
<comment type="pathway">
    <text evidence="1">Cofactor biosynthesis; thiamine diphosphate biosynthesis; thiamine phosphate from 4-amino-2-methyl-5-diphosphomethylpyrimidine and 4-methyl-5-(2-phosphoethyl)-thiazole: step 1/1.</text>
</comment>
<comment type="similarity">
    <text evidence="1">Belongs to the thiamine-phosphate synthase family.</text>
</comment>
<organism>
    <name type="scientific">Escherichia coli O9:H4 (strain HS)</name>
    <dbReference type="NCBI Taxonomy" id="331112"/>
    <lineage>
        <taxon>Bacteria</taxon>
        <taxon>Pseudomonadati</taxon>
        <taxon>Pseudomonadota</taxon>
        <taxon>Gammaproteobacteria</taxon>
        <taxon>Enterobacterales</taxon>
        <taxon>Enterobacteriaceae</taxon>
        <taxon>Escherichia</taxon>
    </lineage>
</organism>
<keyword id="KW-0460">Magnesium</keyword>
<keyword id="KW-0479">Metal-binding</keyword>
<keyword id="KW-0784">Thiamine biosynthesis</keyword>
<keyword id="KW-0808">Transferase</keyword>
<sequence length="211" mass="23027">MYQPDFPPVPFRLGLYPVVDSVQWIERLLDAGVRTLQLRIKDRRDEEVEADVVAAIALGRRYNARLFINDYWRLAIKHQAYGVHLGQEDLQATDLNAIRAAGLRLGVSTHDDMEIDVALAARPSYIALGHVFPTQTKQMPSAPQGLEQLARHVERLADYPTVAIGGVSLARAPAVIATGVGSIAVVSAITQAADWRLATAQLLEIAGVGDE</sequence>
<protein>
    <recommendedName>
        <fullName evidence="1">Thiamine-phosphate synthase</fullName>
        <shortName evidence="1">TP synthase</shortName>
        <shortName evidence="1">TPS</shortName>
        <ecNumber evidence="1">2.5.1.3</ecNumber>
    </recommendedName>
    <alternativeName>
        <fullName evidence="1">Thiamine-phosphate pyrophosphorylase</fullName>
        <shortName evidence="1">TMP pyrophosphorylase</shortName>
        <shortName evidence="1">TMP-PPase</shortName>
    </alternativeName>
</protein>
<name>THIE_ECOHS</name>
<proteinExistence type="inferred from homology"/>
<accession>A8A793</accession>
<gene>
    <name evidence="1" type="primary">thiE</name>
    <name type="ordered locus">EcHS_A4227</name>
</gene>
<reference key="1">
    <citation type="journal article" date="2008" name="J. Bacteriol.">
        <title>The pangenome structure of Escherichia coli: comparative genomic analysis of E. coli commensal and pathogenic isolates.</title>
        <authorList>
            <person name="Rasko D.A."/>
            <person name="Rosovitz M.J."/>
            <person name="Myers G.S.A."/>
            <person name="Mongodin E.F."/>
            <person name="Fricke W.F."/>
            <person name="Gajer P."/>
            <person name="Crabtree J."/>
            <person name="Sebaihia M."/>
            <person name="Thomson N.R."/>
            <person name="Chaudhuri R."/>
            <person name="Henderson I.R."/>
            <person name="Sperandio V."/>
            <person name="Ravel J."/>
        </authorList>
    </citation>
    <scope>NUCLEOTIDE SEQUENCE [LARGE SCALE GENOMIC DNA]</scope>
    <source>
        <strain>HS</strain>
    </source>
</reference>